<evidence type="ECO:0000255" key="1"/>
<evidence type="ECO:0000269" key="2">
    <source>
    </source>
</evidence>
<evidence type="ECO:0000305" key="3"/>
<protein>
    <recommendedName>
        <fullName>Tubulin gamma chain</fullName>
    </recommendedName>
    <alternativeName>
        <fullName>Gamma-tubulin</fullName>
    </alternativeName>
</protein>
<reference key="1">
    <citation type="journal article" date="2000" name="J. Cell Sci.">
        <title>Identification and characterization of Caenorhabditis elegans gamma-tubulin in dividing cells and differentiated tissues.</title>
        <authorList>
            <person name="Bobinnec Y."/>
            <person name="Fukuda M."/>
            <person name="Nishida E."/>
        </authorList>
    </citation>
    <scope>NUCLEOTIDE SEQUENCE [MRNA]</scope>
</reference>
<reference key="2">
    <citation type="journal article" date="1994" name="Nature">
        <title>2.2 Mb of contiguous nucleotide sequence from chromosome III of C. elegans.</title>
        <authorList>
            <person name="Wilson R."/>
            <person name="Ainscough R."/>
            <person name="Anderson K."/>
            <person name="Baynes C."/>
            <person name="Berks M."/>
            <person name="Bonfield J."/>
            <person name="Burton J."/>
            <person name="Connell M."/>
            <person name="Copsey T."/>
            <person name="Cooper J."/>
            <person name="Coulson A."/>
            <person name="Craxton M."/>
            <person name="Dear S."/>
            <person name="Du Z."/>
            <person name="Durbin R."/>
            <person name="Favello A."/>
            <person name="Fraser A."/>
            <person name="Fulton L."/>
            <person name="Gardner A."/>
            <person name="Green P."/>
            <person name="Hawkins T."/>
            <person name="Hillier L."/>
            <person name="Jier M."/>
            <person name="Johnston L."/>
            <person name="Jones M."/>
            <person name="Kershaw J."/>
            <person name="Kirsten J."/>
            <person name="Laisster N."/>
            <person name="Latreille P."/>
            <person name="Lightning J."/>
            <person name="Lloyd C."/>
            <person name="Mortimore B."/>
            <person name="O'Callaghan M."/>
            <person name="Parsons J."/>
            <person name="Percy C."/>
            <person name="Rifken L."/>
            <person name="Roopra A."/>
            <person name="Saunders D."/>
            <person name="Shownkeen R."/>
            <person name="Sims M."/>
            <person name="Smaldon N."/>
            <person name="Smith A."/>
            <person name="Smith M."/>
            <person name="Sonnhammer E."/>
            <person name="Staden R."/>
            <person name="Sulston J."/>
            <person name="Thierry-Mieg J."/>
            <person name="Thomas K."/>
            <person name="Vaudin M."/>
            <person name="Vaughan K."/>
            <person name="Waterston R."/>
            <person name="Watson A."/>
            <person name="Weinstock L."/>
            <person name="Wilkinson-Sproat J."/>
            <person name="Wohldman P."/>
        </authorList>
    </citation>
    <scope>NUCLEOTIDE SEQUENCE [LARGE SCALE GENOMIC DNA]</scope>
    <source>
        <strain>Bristol N2</strain>
    </source>
</reference>
<reference key="3">
    <citation type="journal article" date="1998" name="Science">
        <title>Genome sequence of the nematode C. elegans: a platform for investigating biology.</title>
        <authorList>
            <consortium name="The C. elegans sequencing consortium"/>
        </authorList>
    </citation>
    <scope>NUCLEOTIDE SEQUENCE [LARGE SCALE GENOMIC DNA]</scope>
    <source>
        <strain>Bristol N2</strain>
    </source>
</reference>
<reference key="4">
    <citation type="journal article" date="2016" name="Development">
        <title>Non-centrosomal epidermal microtubules act in parallel to LET-502/ROCK to promote C. elegans elongation.</title>
        <authorList>
            <person name="Quintin S."/>
            <person name="Wang S."/>
            <person name="Pontabry J."/>
            <person name="Bender A."/>
            <person name="Robin F."/>
            <person name="Hyenne V."/>
            <person name="Landmann F."/>
            <person name="Gally C."/>
            <person name="Oegema K."/>
            <person name="Labouesse M."/>
        </authorList>
    </citation>
    <scope>SUBCELLULAR LOCATION</scope>
    <scope>DEVELOPMENTAL STAGE</scope>
</reference>
<comment type="function">
    <text>Tubulin is the major constituent of microtubules. The gamma chain is found at microtubule organizing centers (MTOC) such as the spindle poles or the centrosome, suggesting that it is involved in the minus-end nucleation of microtubule assembly.</text>
</comment>
<comment type="subcellular location">
    <subcellularLocation>
        <location evidence="3">Cytoplasm</location>
        <location evidence="3">Cytoskeleton</location>
        <location evidence="3">Microtubule organizing center</location>
        <location evidence="3">Centrosome</location>
    </subcellularLocation>
    <subcellularLocation>
        <location evidence="2">Cell junction</location>
        <location evidence="2">Hemidesmosome</location>
    </subcellularLocation>
    <subcellularLocation>
        <location evidence="2">Cell junction</location>
        <location evidence="2">Adherens junction</location>
    </subcellularLocation>
</comment>
<comment type="developmental stage">
    <text evidence="2">Expressed in between seam cells at the lima-bean, 1.5-fold and 3-fold stages of embryonic development.</text>
</comment>
<comment type="similarity">
    <text evidence="3">Belongs to the tubulin family.</text>
</comment>
<keyword id="KW-0965">Cell junction</keyword>
<keyword id="KW-0963">Cytoplasm</keyword>
<keyword id="KW-0206">Cytoskeleton</keyword>
<keyword id="KW-0342">GTP-binding</keyword>
<keyword id="KW-0493">Microtubule</keyword>
<keyword id="KW-0547">Nucleotide-binding</keyword>
<keyword id="KW-1185">Reference proteome</keyword>
<organism>
    <name type="scientific">Caenorhabditis elegans</name>
    <dbReference type="NCBI Taxonomy" id="6239"/>
    <lineage>
        <taxon>Eukaryota</taxon>
        <taxon>Metazoa</taxon>
        <taxon>Ecdysozoa</taxon>
        <taxon>Nematoda</taxon>
        <taxon>Chromadorea</taxon>
        <taxon>Rhabditida</taxon>
        <taxon>Rhabditina</taxon>
        <taxon>Rhabditomorpha</taxon>
        <taxon>Rhabditoidea</taxon>
        <taxon>Rhabditidae</taxon>
        <taxon>Peloderinae</taxon>
        <taxon>Caenorhabditis</taxon>
    </lineage>
</organism>
<sequence length="444" mass="49929">MSGTGALMTVHVGQCGNQLAQAFWKSMVDEHGINERGQTTHEDDMNDKKDLLFYQADDDHYVPRAVLVDLEPRVINGMMQSPNFSNLFNTDNIFMSDHGGGAGNNWASGYCQGQEVQEKIMDIIIREAENTNNLDGILFTHSVSGGTGSGTGSLLLERLREAFPKKVIQTYSVFANSDTSTDVVVHPYNWVLSMQRLIENPDHVVVLDNAALHRLAAGKFKTDTPTFDHINSLVARIMSTSTAPYRFNSAMCPSIRYLDLAPFPPMHFIQSAISPVVDPNENFTRKTSVADVTRFLLKPTSMMVSTASRVRPNDCMLSAYMFLQGQIEAHTIMTAEQNVDFAIRRPPFYMLKPLRMMHAPLSPYVRPQYKVSGLLLNNSTSVAPLFESLLSKYDKLRSKRAFIDKFEKIDNFSLDMMDDAMHIVQDLLDEYKAVVQKDYLTRGL</sequence>
<gene>
    <name type="primary">tbg-1</name>
    <name type="ORF">F58A4.8</name>
</gene>
<accession>P34475</accession>
<dbReference type="EMBL" id="AF287259">
    <property type="protein sequence ID" value="AAG24513.1"/>
    <property type="molecule type" value="mRNA"/>
</dbReference>
<dbReference type="EMBL" id="Z22179">
    <property type="protein sequence ID" value="CAA80164.1"/>
    <property type="molecule type" value="Genomic_DNA"/>
</dbReference>
<dbReference type="PIR" id="S40980">
    <property type="entry name" value="S40980"/>
</dbReference>
<dbReference type="RefSeq" id="NP_499131.1">
    <property type="nucleotide sequence ID" value="NM_066730.9"/>
</dbReference>
<dbReference type="SMR" id="P34475"/>
<dbReference type="BioGRID" id="41556">
    <property type="interactions" value="18"/>
</dbReference>
<dbReference type="DIP" id="DIP-26367N"/>
<dbReference type="FunCoup" id="P34475">
    <property type="interactions" value="2705"/>
</dbReference>
<dbReference type="IntAct" id="P34475">
    <property type="interactions" value="5"/>
</dbReference>
<dbReference type="STRING" id="6239.F58A4.8.1"/>
<dbReference type="PaxDb" id="6239-F58A4.8"/>
<dbReference type="PeptideAtlas" id="P34475"/>
<dbReference type="EnsemblMetazoa" id="F58A4.8.1">
    <property type="protein sequence ID" value="F58A4.8.1"/>
    <property type="gene ID" value="WBGene00006540"/>
</dbReference>
<dbReference type="GeneID" id="176361"/>
<dbReference type="KEGG" id="cel:CELE_F58A4.8"/>
<dbReference type="UCSC" id="F58A4.8.1">
    <property type="organism name" value="c. elegans"/>
</dbReference>
<dbReference type="AGR" id="WB:WBGene00006540"/>
<dbReference type="CTD" id="176361"/>
<dbReference type="WormBase" id="F58A4.8">
    <property type="protein sequence ID" value="CE00224"/>
    <property type="gene ID" value="WBGene00006540"/>
    <property type="gene designation" value="tbg-1"/>
</dbReference>
<dbReference type="eggNOG" id="KOG1374">
    <property type="taxonomic scope" value="Eukaryota"/>
</dbReference>
<dbReference type="GeneTree" id="ENSGT00940000174463"/>
<dbReference type="HOGENOM" id="CLU_015718_1_0_1"/>
<dbReference type="InParanoid" id="P34475"/>
<dbReference type="OMA" id="HRYISIL"/>
<dbReference type="OrthoDB" id="10249382at2759"/>
<dbReference type="PhylomeDB" id="P34475"/>
<dbReference type="SignaLink" id="P34475"/>
<dbReference type="PRO" id="PR:P34475"/>
<dbReference type="Proteomes" id="UP000001940">
    <property type="component" value="Chromosome III"/>
</dbReference>
<dbReference type="Bgee" id="WBGene00006540">
    <property type="expression patterns" value="Expressed in adult organism and 4 other cell types or tissues"/>
</dbReference>
<dbReference type="GO" id="GO:0005912">
    <property type="term" value="C:adherens junction"/>
    <property type="evidence" value="ECO:0007669"/>
    <property type="project" value="UniProtKB-SubCell"/>
</dbReference>
<dbReference type="GO" id="GO:0005813">
    <property type="term" value="C:centrosome"/>
    <property type="evidence" value="ECO:0000314"/>
    <property type="project" value="UniProtKB"/>
</dbReference>
<dbReference type="GO" id="GO:0005737">
    <property type="term" value="C:cytoplasm"/>
    <property type="evidence" value="ECO:0000314"/>
    <property type="project" value="UniProtKB"/>
</dbReference>
<dbReference type="GO" id="GO:0000931">
    <property type="term" value="C:gamma-tubulin ring complex"/>
    <property type="evidence" value="ECO:0000318"/>
    <property type="project" value="GO_Central"/>
</dbReference>
<dbReference type="GO" id="GO:0030056">
    <property type="term" value="C:hemidesmosome"/>
    <property type="evidence" value="ECO:0007669"/>
    <property type="project" value="UniProtKB-SubCell"/>
</dbReference>
<dbReference type="GO" id="GO:0005874">
    <property type="term" value="C:microtubule"/>
    <property type="evidence" value="ECO:0007669"/>
    <property type="project" value="UniProtKB-KW"/>
</dbReference>
<dbReference type="GO" id="GO:0005634">
    <property type="term" value="C:nucleus"/>
    <property type="evidence" value="ECO:0000318"/>
    <property type="project" value="GO_Central"/>
</dbReference>
<dbReference type="GO" id="GO:0005819">
    <property type="term" value="C:spindle"/>
    <property type="evidence" value="ECO:0000318"/>
    <property type="project" value="GO_Central"/>
</dbReference>
<dbReference type="GO" id="GO:0005525">
    <property type="term" value="F:GTP binding"/>
    <property type="evidence" value="ECO:0000318"/>
    <property type="project" value="GO_Central"/>
</dbReference>
<dbReference type="GO" id="GO:0140490">
    <property type="term" value="F:microtubule nucleator activity"/>
    <property type="evidence" value="ECO:0000318"/>
    <property type="project" value="GO_Central"/>
</dbReference>
<dbReference type="GO" id="GO:0005200">
    <property type="term" value="F:structural constituent of cytoskeleton"/>
    <property type="evidence" value="ECO:0000250"/>
    <property type="project" value="WormBase"/>
</dbReference>
<dbReference type="GO" id="GO:0031122">
    <property type="term" value="P:cytoplasmic microtubule organization"/>
    <property type="evidence" value="ECO:0007669"/>
    <property type="project" value="InterPro"/>
</dbReference>
<dbReference type="GO" id="GO:0016048">
    <property type="term" value="P:detection of temperature stimulus"/>
    <property type="evidence" value="ECO:0000316"/>
    <property type="project" value="UniProtKB"/>
</dbReference>
<dbReference type="GO" id="GO:0051661">
    <property type="term" value="P:maintenance of centrosome location"/>
    <property type="evidence" value="ECO:0000316"/>
    <property type="project" value="UniProtKB"/>
</dbReference>
<dbReference type="GO" id="GO:0000212">
    <property type="term" value="P:meiotic spindle organization"/>
    <property type="evidence" value="ECO:0000318"/>
    <property type="project" value="GO_Central"/>
</dbReference>
<dbReference type="GO" id="GO:0007020">
    <property type="term" value="P:microtubule nucleation"/>
    <property type="evidence" value="ECO:0000315"/>
    <property type="project" value="WormBase"/>
</dbReference>
<dbReference type="GO" id="GO:0000278">
    <property type="term" value="P:mitotic cell cycle"/>
    <property type="evidence" value="ECO:0000318"/>
    <property type="project" value="GO_Central"/>
</dbReference>
<dbReference type="GO" id="GO:0000070">
    <property type="term" value="P:mitotic sister chromatid segregation"/>
    <property type="evidence" value="ECO:0000315"/>
    <property type="project" value="WormBase"/>
</dbReference>
<dbReference type="GO" id="GO:0007052">
    <property type="term" value="P:mitotic spindle organization"/>
    <property type="evidence" value="ECO:0000315"/>
    <property type="project" value="WormBase"/>
</dbReference>
<dbReference type="GO" id="GO:0009794">
    <property type="term" value="P:regulation of mitotic cell cycle, embryonic"/>
    <property type="evidence" value="ECO:0000316"/>
    <property type="project" value="UniProtKB"/>
</dbReference>
<dbReference type="GO" id="GO:1903436">
    <property type="term" value="P:regulation of mitotic cytokinetic process"/>
    <property type="evidence" value="ECO:0000316"/>
    <property type="project" value="UniProtKB"/>
</dbReference>
<dbReference type="CDD" id="cd02188">
    <property type="entry name" value="gamma_tubulin"/>
    <property type="match status" value="1"/>
</dbReference>
<dbReference type="FunFam" id="1.10.287.600:FF:000004">
    <property type="entry name" value="Tubulin gamma chain"/>
    <property type="match status" value="1"/>
</dbReference>
<dbReference type="FunFam" id="3.30.1330.20:FF:000024">
    <property type="entry name" value="Tubulin gamma chain"/>
    <property type="match status" value="1"/>
</dbReference>
<dbReference type="FunFam" id="3.40.50.1440:FF:000041">
    <property type="entry name" value="Tubulin gamma chain"/>
    <property type="match status" value="1"/>
</dbReference>
<dbReference type="Gene3D" id="1.10.287.600">
    <property type="entry name" value="Helix hairpin bin"/>
    <property type="match status" value="1"/>
</dbReference>
<dbReference type="Gene3D" id="3.30.1330.20">
    <property type="entry name" value="Tubulin/FtsZ, C-terminal domain"/>
    <property type="match status" value="1"/>
</dbReference>
<dbReference type="Gene3D" id="3.40.50.1440">
    <property type="entry name" value="Tubulin/FtsZ, GTPase domain"/>
    <property type="match status" value="1"/>
</dbReference>
<dbReference type="InterPro" id="IPR002454">
    <property type="entry name" value="Gamma_tubulin"/>
</dbReference>
<dbReference type="InterPro" id="IPR008280">
    <property type="entry name" value="Tub_FtsZ_C"/>
</dbReference>
<dbReference type="InterPro" id="IPR000217">
    <property type="entry name" value="Tubulin"/>
</dbReference>
<dbReference type="InterPro" id="IPR037103">
    <property type="entry name" value="Tubulin/FtsZ-like_C"/>
</dbReference>
<dbReference type="InterPro" id="IPR018316">
    <property type="entry name" value="Tubulin/FtsZ_2-layer-sand-dom"/>
</dbReference>
<dbReference type="InterPro" id="IPR036525">
    <property type="entry name" value="Tubulin/FtsZ_GTPase_sf"/>
</dbReference>
<dbReference type="InterPro" id="IPR023123">
    <property type="entry name" value="Tubulin_C"/>
</dbReference>
<dbReference type="InterPro" id="IPR017975">
    <property type="entry name" value="Tubulin_CS"/>
</dbReference>
<dbReference type="InterPro" id="IPR003008">
    <property type="entry name" value="Tubulin_FtsZ_GTPase"/>
</dbReference>
<dbReference type="PANTHER" id="PTHR11588">
    <property type="entry name" value="TUBULIN"/>
    <property type="match status" value="1"/>
</dbReference>
<dbReference type="Pfam" id="PF00091">
    <property type="entry name" value="Tubulin"/>
    <property type="match status" value="1"/>
</dbReference>
<dbReference type="Pfam" id="PF03953">
    <property type="entry name" value="Tubulin_C"/>
    <property type="match status" value="1"/>
</dbReference>
<dbReference type="PRINTS" id="PR01164">
    <property type="entry name" value="GAMMATUBULIN"/>
</dbReference>
<dbReference type="PRINTS" id="PR01161">
    <property type="entry name" value="TUBULIN"/>
</dbReference>
<dbReference type="SMART" id="SM00864">
    <property type="entry name" value="Tubulin"/>
    <property type="match status" value="1"/>
</dbReference>
<dbReference type="SUPFAM" id="SSF55307">
    <property type="entry name" value="Tubulin C-terminal domain-like"/>
    <property type="match status" value="1"/>
</dbReference>
<dbReference type="SUPFAM" id="SSF52490">
    <property type="entry name" value="Tubulin nucleotide-binding domain-like"/>
    <property type="match status" value="1"/>
</dbReference>
<dbReference type="PROSITE" id="PS00227">
    <property type="entry name" value="TUBULIN"/>
    <property type="match status" value="1"/>
</dbReference>
<proteinExistence type="evidence at transcript level"/>
<feature type="chain" id="PRO_0000048448" description="Tubulin gamma chain">
    <location>
        <begin position="1"/>
        <end position="444"/>
    </location>
</feature>
<feature type="binding site" evidence="1">
    <location>
        <begin position="144"/>
        <end position="150"/>
    </location>
    <ligand>
        <name>GTP</name>
        <dbReference type="ChEBI" id="CHEBI:37565"/>
    </ligand>
</feature>
<name>TBG_CAEEL</name>